<name>RILP_HUMAN</name>
<keyword id="KW-0002">3D-structure</keyword>
<keyword id="KW-0025">Alternative splicing</keyword>
<keyword id="KW-0175">Coiled coil</keyword>
<keyword id="KW-0968">Cytoplasmic vesicle</keyword>
<keyword id="KW-0967">Endosome</keyword>
<keyword id="KW-0458">Lysosome</keyword>
<keyword id="KW-0472">Membrane</keyword>
<keyword id="KW-0597">Phosphoprotein</keyword>
<keyword id="KW-0653">Protein transport</keyword>
<keyword id="KW-1267">Proteomics identification</keyword>
<keyword id="KW-1185">Reference proteome</keyword>
<keyword id="KW-0813">Transport</keyword>
<gene>
    <name type="primary">RILP</name>
    <name type="ORF">PP10141</name>
</gene>
<proteinExistence type="evidence at protein level"/>
<dbReference type="EMBL" id="AJ404317">
    <property type="protein sequence ID" value="CAC33443.1"/>
    <property type="molecule type" value="mRNA"/>
</dbReference>
<dbReference type="EMBL" id="AK055755">
    <property type="protein sequence ID" value="BAB71003.1"/>
    <property type="molecule type" value="mRNA"/>
</dbReference>
<dbReference type="EMBL" id="AK314767">
    <property type="protein sequence ID" value="BAG37305.1"/>
    <property type="molecule type" value="mRNA"/>
</dbReference>
<dbReference type="EMBL" id="AF370391">
    <property type="protein sequence ID" value="AAQ15227.1"/>
    <property type="molecule type" value="mRNA"/>
</dbReference>
<dbReference type="EMBL" id="AJ278711">
    <property type="protein sequence ID" value="CAC82174.1"/>
    <property type="molecule type" value="mRNA"/>
</dbReference>
<dbReference type="EMBL" id="BC004961">
    <property type="protein sequence ID" value="AAH04961.1"/>
    <property type="molecule type" value="mRNA"/>
</dbReference>
<dbReference type="EMBL" id="BC031621">
    <property type="protein sequence ID" value="AAH31621.1"/>
    <property type="molecule type" value="mRNA"/>
</dbReference>
<dbReference type="CCDS" id="CCDS11009.1">
    <molecule id="Q96NA2-1"/>
</dbReference>
<dbReference type="RefSeq" id="NP_113618.2">
    <molecule id="Q96NA2-1"/>
    <property type="nucleotide sequence ID" value="NM_031430.3"/>
</dbReference>
<dbReference type="PDB" id="1YHN">
    <property type="method" value="X-ray"/>
    <property type="resolution" value="3.00 A"/>
    <property type="chains" value="B=244-308"/>
</dbReference>
<dbReference type="PDBsum" id="1YHN"/>
<dbReference type="SMR" id="Q96NA2"/>
<dbReference type="BioGRID" id="123679">
    <property type="interactions" value="53"/>
</dbReference>
<dbReference type="CORUM" id="Q96NA2"/>
<dbReference type="DIP" id="DIP-29458N"/>
<dbReference type="FunCoup" id="Q96NA2">
    <property type="interactions" value="229"/>
</dbReference>
<dbReference type="IntAct" id="Q96NA2">
    <property type="interactions" value="26"/>
</dbReference>
<dbReference type="STRING" id="9606.ENSP00000301336"/>
<dbReference type="iPTMnet" id="Q96NA2"/>
<dbReference type="PhosphoSitePlus" id="Q96NA2"/>
<dbReference type="BioMuta" id="RILP"/>
<dbReference type="DMDM" id="74732524"/>
<dbReference type="jPOST" id="Q96NA2"/>
<dbReference type="MassIVE" id="Q96NA2"/>
<dbReference type="PaxDb" id="9606-ENSP00000301336"/>
<dbReference type="PeptideAtlas" id="Q96NA2"/>
<dbReference type="ProteomicsDB" id="77494">
    <molecule id="Q96NA2-1"/>
</dbReference>
<dbReference type="ProteomicsDB" id="77495">
    <molecule id="Q96NA2-2"/>
</dbReference>
<dbReference type="Pumba" id="Q96NA2"/>
<dbReference type="Antibodypedia" id="42527">
    <property type="antibodies" value="75 antibodies from 25 providers"/>
</dbReference>
<dbReference type="DNASU" id="83547"/>
<dbReference type="Ensembl" id="ENST00000301336.7">
    <molecule id="Q96NA2-1"/>
    <property type="protein sequence ID" value="ENSP00000301336.6"/>
    <property type="gene ID" value="ENSG00000167705.12"/>
</dbReference>
<dbReference type="Ensembl" id="ENST00000622136.2">
    <molecule id="Q96NA2-1"/>
    <property type="protein sequence ID" value="ENSP00000481849.1"/>
    <property type="gene ID" value="ENSG00000274145.2"/>
</dbReference>
<dbReference type="GeneID" id="83547"/>
<dbReference type="KEGG" id="hsa:83547"/>
<dbReference type="MANE-Select" id="ENST00000301336.7">
    <property type="protein sequence ID" value="ENSP00000301336.6"/>
    <property type="RefSeq nucleotide sequence ID" value="NM_031430.3"/>
    <property type="RefSeq protein sequence ID" value="NP_113618.2"/>
</dbReference>
<dbReference type="UCSC" id="uc002ftd.4">
    <molecule id="Q96NA2-1"/>
    <property type="organism name" value="human"/>
</dbReference>
<dbReference type="AGR" id="HGNC:30266"/>
<dbReference type="CTD" id="83547"/>
<dbReference type="DisGeNET" id="83547"/>
<dbReference type="GeneCards" id="RILP"/>
<dbReference type="HGNC" id="HGNC:30266">
    <property type="gene designation" value="RILP"/>
</dbReference>
<dbReference type="HPA" id="ENSG00000167705">
    <property type="expression patterns" value="Tissue enhanced (heart muscle, skeletal muscle)"/>
</dbReference>
<dbReference type="MalaCards" id="RILP"/>
<dbReference type="MIM" id="607848">
    <property type="type" value="gene"/>
</dbReference>
<dbReference type="neXtProt" id="NX_Q96NA2"/>
<dbReference type="OpenTargets" id="ENSG00000167705"/>
<dbReference type="PharmGKB" id="PA134915969"/>
<dbReference type="VEuPathDB" id="HostDB:ENSG00000167705"/>
<dbReference type="eggNOG" id="ENOG502RXH1">
    <property type="taxonomic scope" value="Eukaryota"/>
</dbReference>
<dbReference type="GeneTree" id="ENSGT00940000161117"/>
<dbReference type="HOGENOM" id="CLU_044133_1_0_1"/>
<dbReference type="InParanoid" id="Q96NA2"/>
<dbReference type="OMA" id="HSCGPRV"/>
<dbReference type="OrthoDB" id="10069524at2759"/>
<dbReference type="PAN-GO" id="Q96NA2">
    <property type="GO annotations" value="5 GO annotations based on evolutionary models"/>
</dbReference>
<dbReference type="PhylomeDB" id="Q96NA2"/>
<dbReference type="TreeFam" id="TF313489"/>
<dbReference type="PathwayCommons" id="Q96NA2"/>
<dbReference type="Reactome" id="R-HSA-2132295">
    <property type="pathway name" value="MHC class II antigen presentation"/>
</dbReference>
<dbReference type="SignaLink" id="Q96NA2"/>
<dbReference type="BioGRID-ORCS" id="83547">
    <property type="hits" value="54 hits in 1149 CRISPR screens"/>
</dbReference>
<dbReference type="ChiTaRS" id="RILP">
    <property type="organism name" value="human"/>
</dbReference>
<dbReference type="EvolutionaryTrace" id="Q96NA2"/>
<dbReference type="GeneWiki" id="RILP_(gene)"/>
<dbReference type="GenomeRNAi" id="83547"/>
<dbReference type="Pharos" id="Q96NA2">
    <property type="development level" value="Tbio"/>
</dbReference>
<dbReference type="PRO" id="PR:Q96NA2"/>
<dbReference type="Proteomes" id="UP000005640">
    <property type="component" value="Chromosome 17"/>
</dbReference>
<dbReference type="RNAct" id="Q96NA2">
    <property type="molecule type" value="protein"/>
</dbReference>
<dbReference type="Bgee" id="ENSG00000167705">
    <property type="expression patterns" value="Expressed in apex of heart and 95 other cell types or tissues"/>
</dbReference>
<dbReference type="ExpressionAtlas" id="Q96NA2">
    <property type="expression patterns" value="baseline and differential"/>
</dbReference>
<dbReference type="GO" id="GO:0036064">
    <property type="term" value="C:ciliary basal body"/>
    <property type="evidence" value="ECO:0000318"/>
    <property type="project" value="GO_Central"/>
</dbReference>
<dbReference type="GO" id="GO:0005737">
    <property type="term" value="C:cytoplasm"/>
    <property type="evidence" value="ECO:0000318"/>
    <property type="project" value="GO_Central"/>
</dbReference>
<dbReference type="GO" id="GO:0005770">
    <property type="term" value="C:late endosome"/>
    <property type="evidence" value="ECO:0000314"/>
    <property type="project" value="UniProtKB"/>
</dbReference>
<dbReference type="GO" id="GO:0031902">
    <property type="term" value="C:late endosome membrane"/>
    <property type="evidence" value="ECO:0007669"/>
    <property type="project" value="UniProtKB-SubCell"/>
</dbReference>
<dbReference type="GO" id="GO:0005765">
    <property type="term" value="C:lysosomal membrane"/>
    <property type="evidence" value="ECO:0000304"/>
    <property type="project" value="Reactome"/>
</dbReference>
<dbReference type="GO" id="GO:0005764">
    <property type="term" value="C:lysosome"/>
    <property type="evidence" value="ECO:0000314"/>
    <property type="project" value="BHF-UCL"/>
</dbReference>
<dbReference type="GO" id="GO:0030670">
    <property type="term" value="C:phagocytic vesicle membrane"/>
    <property type="evidence" value="ECO:0007669"/>
    <property type="project" value="UniProtKB-SubCell"/>
</dbReference>
<dbReference type="GO" id="GO:0032991">
    <property type="term" value="C:protein-containing complex"/>
    <property type="evidence" value="ECO:0007669"/>
    <property type="project" value="Ensembl"/>
</dbReference>
<dbReference type="GO" id="GO:0051959">
    <property type="term" value="F:dynein light intermediate chain binding"/>
    <property type="evidence" value="ECO:0000353"/>
    <property type="project" value="FlyBase"/>
</dbReference>
<dbReference type="GO" id="GO:0046983">
    <property type="term" value="F:protein dimerization activity"/>
    <property type="evidence" value="ECO:0007669"/>
    <property type="project" value="InterPro"/>
</dbReference>
<dbReference type="GO" id="GO:0031267">
    <property type="term" value="F:small GTPase binding"/>
    <property type="evidence" value="ECO:0000353"/>
    <property type="project" value="BHF-UCL"/>
</dbReference>
<dbReference type="GO" id="GO:0060271">
    <property type="term" value="P:cilium assembly"/>
    <property type="evidence" value="ECO:0000318"/>
    <property type="project" value="GO_Central"/>
</dbReference>
<dbReference type="GO" id="GO:0045022">
    <property type="term" value="P:early endosome to late endosome transport"/>
    <property type="evidence" value="ECO:0000315"/>
    <property type="project" value="UniProtKB"/>
</dbReference>
<dbReference type="GO" id="GO:0008333">
    <property type="term" value="P:endosome to lysosome transport"/>
    <property type="evidence" value="ECO:0000315"/>
    <property type="project" value="BHF-UCL"/>
</dbReference>
<dbReference type="GO" id="GO:0032509">
    <property type="term" value="P:endosome transport via multivesicular body sorting pathway"/>
    <property type="evidence" value="ECO:0000314"/>
    <property type="project" value="UniProtKB"/>
</dbReference>
<dbReference type="GO" id="GO:0070676">
    <property type="term" value="P:intralumenal vesicle formation"/>
    <property type="evidence" value="ECO:0000315"/>
    <property type="project" value="UniProtKB"/>
</dbReference>
<dbReference type="GO" id="GO:0042177">
    <property type="term" value="P:negative regulation of protein catabolic process"/>
    <property type="evidence" value="ECO:0000314"/>
    <property type="project" value="UniProtKB"/>
</dbReference>
<dbReference type="GO" id="GO:0045732">
    <property type="term" value="P:positive regulation of protein catabolic process"/>
    <property type="evidence" value="ECO:0000315"/>
    <property type="project" value="UniProtKB"/>
</dbReference>
<dbReference type="GO" id="GO:0015031">
    <property type="term" value="P:protein transport"/>
    <property type="evidence" value="ECO:0000303"/>
    <property type="project" value="UniProtKB"/>
</dbReference>
<dbReference type="FunFam" id="1.20.58.1770:FF:000004">
    <property type="entry name" value="Rab interacting lysosomal protein"/>
    <property type="match status" value="1"/>
</dbReference>
<dbReference type="Gene3D" id="1.20.58.1770">
    <property type="match status" value="1"/>
</dbReference>
<dbReference type="Gene3D" id="6.10.230.10">
    <property type="match status" value="1"/>
</dbReference>
<dbReference type="InterPro" id="IPR051241">
    <property type="entry name" value="DZIP_RILPL"/>
</dbReference>
<dbReference type="InterPro" id="IPR034743">
    <property type="entry name" value="RH1"/>
</dbReference>
<dbReference type="InterPro" id="IPR034744">
    <property type="entry name" value="RH2"/>
</dbReference>
<dbReference type="InterPro" id="IPR021563">
    <property type="entry name" value="RILP_dimer"/>
</dbReference>
<dbReference type="PANTHER" id="PTHR21502:SF7">
    <property type="entry name" value="RAB-INTERACTING LYSOSOMAL PROTEIN"/>
    <property type="match status" value="1"/>
</dbReference>
<dbReference type="PANTHER" id="PTHR21502">
    <property type="entry name" value="ZINC FINGER PROTEIN DZIP1"/>
    <property type="match status" value="1"/>
</dbReference>
<dbReference type="Pfam" id="PF09744">
    <property type="entry name" value="RH1"/>
    <property type="match status" value="1"/>
</dbReference>
<dbReference type="Pfam" id="PF11461">
    <property type="entry name" value="RILP"/>
    <property type="match status" value="1"/>
</dbReference>
<dbReference type="SUPFAM" id="SSF161256">
    <property type="entry name" value="RILP dimerisation region"/>
    <property type="match status" value="1"/>
</dbReference>
<dbReference type="PROSITE" id="PS51776">
    <property type="entry name" value="RH1"/>
    <property type="match status" value="1"/>
</dbReference>
<dbReference type="PROSITE" id="PS51777">
    <property type="entry name" value="RH2"/>
    <property type="match status" value="1"/>
</dbReference>
<reference key="1">
    <citation type="journal article" date="2001" name="EMBO J.">
        <title>Rab-interacting lysosomal protein (RILP): the Rab7 effector required for transport to lysosomes.</title>
        <authorList>
            <person name="Cantalupo G."/>
            <person name="Alifano P."/>
            <person name="Roberti V."/>
            <person name="Bruni C.B."/>
            <person name="Bucci C."/>
        </authorList>
    </citation>
    <scope>NUCLEOTIDE SEQUENCE [MRNA] (ISOFORM 1)</scope>
    <scope>FUNCTION IN LATE ENDOCYTOSIS</scope>
    <scope>INTERACTION WITH RAB7A</scope>
    <scope>SUBCELLULAR LOCATION</scope>
    <scope>TISSUE SPECIFICITY</scope>
    <source>
        <tissue>Cervix carcinoma</tissue>
    </source>
</reference>
<reference key="2">
    <citation type="journal article" date="2004" name="Nat. Genet.">
        <title>Complete sequencing and characterization of 21,243 full-length human cDNAs.</title>
        <authorList>
            <person name="Ota T."/>
            <person name="Suzuki Y."/>
            <person name="Nishikawa T."/>
            <person name="Otsuki T."/>
            <person name="Sugiyama T."/>
            <person name="Irie R."/>
            <person name="Wakamatsu A."/>
            <person name="Hayashi K."/>
            <person name="Sato H."/>
            <person name="Nagai K."/>
            <person name="Kimura K."/>
            <person name="Makita H."/>
            <person name="Sekine M."/>
            <person name="Obayashi M."/>
            <person name="Nishi T."/>
            <person name="Shibahara T."/>
            <person name="Tanaka T."/>
            <person name="Ishii S."/>
            <person name="Yamamoto J."/>
            <person name="Saito K."/>
            <person name="Kawai Y."/>
            <person name="Isono Y."/>
            <person name="Nakamura Y."/>
            <person name="Nagahari K."/>
            <person name="Murakami K."/>
            <person name="Yasuda T."/>
            <person name="Iwayanagi T."/>
            <person name="Wagatsuma M."/>
            <person name="Shiratori A."/>
            <person name="Sudo H."/>
            <person name="Hosoiri T."/>
            <person name="Kaku Y."/>
            <person name="Kodaira H."/>
            <person name="Kondo H."/>
            <person name="Sugawara M."/>
            <person name="Takahashi M."/>
            <person name="Kanda K."/>
            <person name="Yokoi T."/>
            <person name="Furuya T."/>
            <person name="Kikkawa E."/>
            <person name="Omura Y."/>
            <person name="Abe K."/>
            <person name="Kamihara K."/>
            <person name="Katsuta N."/>
            <person name="Sato K."/>
            <person name="Tanikawa M."/>
            <person name="Yamazaki M."/>
            <person name="Ninomiya K."/>
            <person name="Ishibashi T."/>
            <person name="Yamashita H."/>
            <person name="Murakawa K."/>
            <person name="Fujimori K."/>
            <person name="Tanai H."/>
            <person name="Kimata M."/>
            <person name="Watanabe M."/>
            <person name="Hiraoka S."/>
            <person name="Chiba Y."/>
            <person name="Ishida S."/>
            <person name="Ono Y."/>
            <person name="Takiguchi S."/>
            <person name="Watanabe S."/>
            <person name="Yosida M."/>
            <person name="Hotuta T."/>
            <person name="Kusano J."/>
            <person name="Kanehori K."/>
            <person name="Takahashi-Fujii A."/>
            <person name="Hara H."/>
            <person name="Tanase T.-O."/>
            <person name="Nomura Y."/>
            <person name="Togiya S."/>
            <person name="Komai F."/>
            <person name="Hara R."/>
            <person name="Takeuchi K."/>
            <person name="Arita M."/>
            <person name="Imose N."/>
            <person name="Musashino K."/>
            <person name="Yuuki H."/>
            <person name="Oshima A."/>
            <person name="Sasaki N."/>
            <person name="Aotsuka S."/>
            <person name="Yoshikawa Y."/>
            <person name="Matsunawa H."/>
            <person name="Ichihara T."/>
            <person name="Shiohata N."/>
            <person name="Sano S."/>
            <person name="Moriya S."/>
            <person name="Momiyama H."/>
            <person name="Satoh N."/>
            <person name="Takami S."/>
            <person name="Terashima Y."/>
            <person name="Suzuki O."/>
            <person name="Nakagawa S."/>
            <person name="Senoh A."/>
            <person name="Mizoguchi H."/>
            <person name="Goto Y."/>
            <person name="Shimizu F."/>
            <person name="Wakebe H."/>
            <person name="Hishigaki H."/>
            <person name="Watanabe T."/>
            <person name="Sugiyama A."/>
            <person name="Takemoto M."/>
            <person name="Kawakami B."/>
            <person name="Yamazaki M."/>
            <person name="Watanabe K."/>
            <person name="Kumagai A."/>
            <person name="Itakura S."/>
            <person name="Fukuzumi Y."/>
            <person name="Fujimori Y."/>
            <person name="Komiyama M."/>
            <person name="Tashiro H."/>
            <person name="Tanigami A."/>
            <person name="Fujiwara T."/>
            <person name="Ono T."/>
            <person name="Yamada K."/>
            <person name="Fujii Y."/>
            <person name="Ozaki K."/>
            <person name="Hirao M."/>
            <person name="Ohmori Y."/>
            <person name="Kawabata A."/>
            <person name="Hikiji T."/>
            <person name="Kobatake N."/>
            <person name="Inagaki H."/>
            <person name="Ikema Y."/>
            <person name="Okamoto S."/>
            <person name="Okitani R."/>
            <person name="Kawakami T."/>
            <person name="Noguchi S."/>
            <person name="Itoh T."/>
            <person name="Shigeta K."/>
            <person name="Senba T."/>
            <person name="Matsumura K."/>
            <person name="Nakajima Y."/>
            <person name="Mizuno T."/>
            <person name="Morinaga M."/>
            <person name="Sasaki M."/>
            <person name="Togashi T."/>
            <person name="Oyama M."/>
            <person name="Hata H."/>
            <person name="Watanabe M."/>
            <person name="Komatsu T."/>
            <person name="Mizushima-Sugano J."/>
            <person name="Satoh T."/>
            <person name="Shirai Y."/>
            <person name="Takahashi Y."/>
            <person name="Nakagawa K."/>
            <person name="Okumura K."/>
            <person name="Nagase T."/>
            <person name="Nomura N."/>
            <person name="Kikuchi H."/>
            <person name="Masuho Y."/>
            <person name="Yamashita R."/>
            <person name="Nakai K."/>
            <person name="Yada T."/>
            <person name="Nakamura Y."/>
            <person name="Ohara O."/>
            <person name="Isogai T."/>
            <person name="Sugano S."/>
        </authorList>
    </citation>
    <scope>NUCLEOTIDE SEQUENCE [LARGE SCALE MRNA] (ISOFORM 1)</scope>
    <scope>VARIANT THR-81</scope>
    <source>
        <tissue>Kidney</tissue>
        <tissue>Thalamus</tissue>
    </source>
</reference>
<reference key="3">
    <citation type="journal article" date="2004" name="Proc. Natl. Acad. Sci. U.S.A.">
        <title>Large-scale cDNA transfection screening for genes related to cancer development and progression.</title>
        <authorList>
            <person name="Wan D."/>
            <person name="Gong Y."/>
            <person name="Qin W."/>
            <person name="Zhang P."/>
            <person name="Li J."/>
            <person name="Wei L."/>
            <person name="Zhou X."/>
            <person name="Li H."/>
            <person name="Qiu X."/>
            <person name="Zhong F."/>
            <person name="He L."/>
            <person name="Yu J."/>
            <person name="Yao G."/>
            <person name="Jiang H."/>
            <person name="Qian L."/>
            <person name="Yu Y."/>
            <person name="Shu H."/>
            <person name="Chen X."/>
            <person name="Xu H."/>
            <person name="Guo M."/>
            <person name="Pan Z."/>
            <person name="Chen Y."/>
            <person name="Ge C."/>
            <person name="Yang S."/>
            <person name="Gu J."/>
        </authorList>
    </citation>
    <scope>NUCLEOTIDE SEQUENCE [LARGE SCALE MRNA] (ISOFORM 2)</scope>
</reference>
<reference key="4">
    <citation type="submission" date="2000-07" db="EMBL/GenBank/DDBJ databases">
        <title>Study of 100 skeletal muscle full length mRNA (Telethon project B41).</title>
        <authorList>
            <person name="Frigimelica E."/>
            <person name="Lanfranchi G."/>
        </authorList>
    </citation>
    <scope>NUCLEOTIDE SEQUENCE [LARGE SCALE MRNA] (ISOFORM 1)</scope>
    <source>
        <tissue>Skeletal muscle</tissue>
    </source>
</reference>
<reference key="5">
    <citation type="journal article" date="2004" name="Genome Res.">
        <title>The status, quality, and expansion of the NIH full-length cDNA project: the Mammalian Gene Collection (MGC).</title>
        <authorList>
            <consortium name="The MGC Project Team"/>
        </authorList>
    </citation>
    <scope>NUCLEOTIDE SEQUENCE [LARGE SCALE MRNA] (ISOFORM 1)</scope>
    <source>
        <tissue>Brain</tissue>
        <tissue>Lung</tissue>
        <tissue>Testis</tissue>
        <tissue>Uterus</tissue>
    </source>
</reference>
<reference key="6">
    <citation type="journal article" date="2001" name="Biochem. Biophys. Res. Commun.">
        <title>Expression analysis and chromosomal assignment of PRA1 and RILP genes.</title>
        <authorList>
            <person name="Bucci C."/>
            <person name="De Gregorio L."/>
            <person name="Bruni C.B."/>
        </authorList>
    </citation>
    <scope>TISSUE SPECIFICITY</scope>
</reference>
<reference key="7">
    <citation type="journal article" date="2001" name="Curr. Biol.">
        <title>The Rab7 effector protein RILP controls lysosomal transport by inducing the recruitment of dynein-dynactin motors.</title>
        <authorList>
            <person name="Jordens I."/>
            <person name="Fernandez-Borja M."/>
            <person name="Marsman M."/>
            <person name="Dusseljee S."/>
            <person name="Janssen L."/>
            <person name="Calafat J."/>
            <person name="Janssen H."/>
            <person name="Wubbolts R."/>
            <person name="Neefjes J."/>
        </authorList>
    </citation>
    <scope>FUNCTION IN DYNEIN-DYNACTIN COMPLEX RECRUITMENT</scope>
</reference>
<reference key="8">
    <citation type="journal article" date="2002" name="Mol. Biol. Cell">
        <title>Interorganellar regulation of lysosome positioning by the Golgi apparatus through Rab34 interaction with Rab-interacting lysosomal protein.</title>
        <authorList>
            <person name="Wang T."/>
            <person name="Hong W."/>
        </authorList>
    </citation>
    <scope>INTERACTION WITH RAB34</scope>
</reference>
<reference key="9">
    <citation type="journal article" date="2003" name="Mol. Cell. Biol.">
        <title>Phagosomes fuse with late endosomes and/or lysosomes by extension of membrane protrusions along microtubules: role of Rab7 and RILP.</title>
        <authorList>
            <person name="Harrison R.E."/>
            <person name="Bucci C."/>
            <person name="Vieira O.V."/>
            <person name="Schroer T.A."/>
            <person name="Grinstein S."/>
        </authorList>
    </citation>
    <scope>FUNCTION IN PHAGOSOME MIGRATION AND PHAGOLYSOSOMAL FUSION</scope>
    <scope>SUBCELLULAR LOCATION</scope>
</reference>
<reference key="10">
    <citation type="journal article" date="2004" name="Mol. Biol. Cell">
        <title>A unique region of RILP distinguishes it from its related proteins in its regulation of lysosomal morphology and interaction with Rab7 and Rab34.</title>
        <authorList>
            <person name="Wang T."/>
            <person name="Wong K.K."/>
            <person name="Hong W."/>
        </authorList>
    </citation>
    <scope>FUNCTION IN LYSOSOMAL MORPHOLOGY AND DISTRIBUTION</scope>
    <scope>INTERACTION WITH RAB7A AND RAB34</scope>
    <scope>SUBCELLULAR LOCATION</scope>
    <scope>TISSUE SPECIFICITY</scope>
</reference>
<reference key="11">
    <citation type="journal article" date="2005" name="Biochem. Biophys. Res. Commun.">
        <title>The Rab-interacting lysosomal protein, a Rab7 and Rab34 effector, is capable of self-interaction.</title>
        <authorList>
            <person name="Colucci A.M.R."/>
            <person name="Campana M.C."/>
            <person name="Bellopede M."/>
            <person name="Bucci C."/>
        </authorList>
    </citation>
    <scope>SUBUNIT</scope>
</reference>
<reference key="12">
    <citation type="journal article" date="2008" name="Proc. Natl. Acad. Sci. U.S.A.">
        <title>A quantitative atlas of mitotic phosphorylation.</title>
        <authorList>
            <person name="Dephoure N."/>
            <person name="Zhou C."/>
            <person name="Villen J."/>
            <person name="Beausoleil S.A."/>
            <person name="Bakalarski C.E."/>
            <person name="Elledge S.J."/>
            <person name="Gygi S.P."/>
        </authorList>
    </citation>
    <scope>PHOSPHORYLATION [LARGE SCALE ANALYSIS] AT SER-314 AND SER-315</scope>
    <scope>IDENTIFICATION BY MASS SPECTROMETRY [LARGE SCALE ANALYSIS]</scope>
    <source>
        <tissue>Cervix carcinoma</tissue>
    </source>
</reference>
<reference key="13">
    <citation type="journal article" date="2012" name="Cell. Mol. Life Sci.">
        <title>Neuronal ceroid lipofuscinosis protein CLN3 interacts with motor proteins and modifies location of late endosomal compartments.</title>
        <authorList>
            <person name="Uusi-Rauva K."/>
            <person name="Kyttala A."/>
            <person name="van der Kant R."/>
            <person name="Vesa J."/>
            <person name="Tanhuanpaa K."/>
            <person name="Neefjes J."/>
            <person name="Olkkonen V.M."/>
            <person name="Jalanko A."/>
        </authorList>
    </citation>
    <scope>INTERACTION WITH CLN3</scope>
</reference>
<reference key="14">
    <citation type="journal article" date="2012" name="Mol. Cell. Biol.">
        <title>The role of ceroid lipofuscinosis neuronal protein 5 (CLN5) in endosomal sorting.</title>
        <authorList>
            <person name="Mamo A."/>
            <person name="Jules F."/>
            <person name="Dumaresq-Doiron K."/>
            <person name="Costantino S."/>
            <person name="Lefrancois S."/>
        </authorList>
    </citation>
    <scope>INTERACTION WITH RAB7A</scope>
</reference>
<reference key="15">
    <citation type="journal article" date="2014" name="J. Proteomics">
        <title>An enzyme assisted RP-RPLC approach for in-depth analysis of human liver phosphoproteome.</title>
        <authorList>
            <person name="Bian Y."/>
            <person name="Song C."/>
            <person name="Cheng K."/>
            <person name="Dong M."/>
            <person name="Wang F."/>
            <person name="Huang J."/>
            <person name="Sun D."/>
            <person name="Wang L."/>
            <person name="Ye M."/>
            <person name="Zou H."/>
        </authorList>
    </citation>
    <scope>PHOSPHORYLATION [LARGE SCALE ANALYSIS] AT THR-308</scope>
    <scope>IDENTIFICATION BY MASS SPECTROMETRY [LARGE SCALE ANALYSIS]</scope>
    <source>
        <tissue>Liver</tissue>
    </source>
</reference>
<reference key="16">
    <citation type="journal article" date="2016" name="EMBO Rep.">
        <title>Folliculin directs the formation of a Rab34-RILP complex to control the nutrient-dependent dynamic distribution of lysosomes.</title>
        <authorList>
            <person name="Starling G.P."/>
            <person name="Yip Y.Y."/>
            <person name="Sanger A."/>
            <person name="Morton P.E."/>
            <person name="Eden E.R."/>
            <person name="Dodding M.P."/>
        </authorList>
    </citation>
    <scope>FUNCTION</scope>
    <scope>INTERACTION WITH RAB34 AND FLCN</scope>
</reference>
<reference key="17">
    <citation type="journal article" date="2005" name="EMBO J.">
        <title>Structural basis for recruitment of RILP by small GTPase Rab7.</title>
        <authorList>
            <person name="Wu M."/>
            <person name="Wang T."/>
            <person name="Loh E."/>
            <person name="Hong W."/>
            <person name="Song H."/>
        </authorList>
    </citation>
    <scope>X-RAY CRYSTALLOGRAPHY (3.0 ANGSTROMS) OF 244-308 IN COMPLEX WITH RAB7A</scope>
    <scope>SUBUNIT</scope>
    <scope>MUTAGENESIS OF PHE-248; ILE-251; LEU-252; ARG-255; LEU-258; LYS-304; MET-305 AND LEU-306</scope>
</reference>
<sequence length="401" mass="44200">MEPRRAAPGVPGWGSREAAGSASAAELVYHLAGALGTELQDLARRFGPEAAAGLVPLVVRALELLEQAAVGPAPDSLQVSAQPAEQELRRLREENERLRRELRAGPQEERALLRQLKEVTDRQRDELRAHNRDLRQRGQETEALQEQLQRLLLVNAELRHKLAAMQTQLRAAQDRERERQQPGEAATPQAKERARGQAGRPGHQHGQEPEWATAGAGAPGNPEDPAEAAQQLGRPSEAGQCRFSREEFEQILQERNELKAKVFLLKEELAYFQRELLTDHRVPGLLLEAMKVAVRKQRKKIKAKMLGTPEEAESSEDEAGPWILLSDDKGDHPPPPESKIQSFFGLWYRGKAESSEDETSSPAPSKLGGEEEAQPQSPAPDPPCSALHEHLCLGASAAPEA</sequence>
<accession>Q96NA2</accession>
<accession>B2RBQ8</accession>
<accession>Q71RE6</accession>
<accession>Q9BSL3</accession>
<accession>Q9BYS3</accession>
<organism>
    <name type="scientific">Homo sapiens</name>
    <name type="common">Human</name>
    <dbReference type="NCBI Taxonomy" id="9606"/>
    <lineage>
        <taxon>Eukaryota</taxon>
        <taxon>Metazoa</taxon>
        <taxon>Chordata</taxon>
        <taxon>Craniata</taxon>
        <taxon>Vertebrata</taxon>
        <taxon>Euteleostomi</taxon>
        <taxon>Mammalia</taxon>
        <taxon>Eutheria</taxon>
        <taxon>Euarchontoglires</taxon>
        <taxon>Primates</taxon>
        <taxon>Haplorrhini</taxon>
        <taxon>Catarrhini</taxon>
        <taxon>Hominidae</taxon>
        <taxon>Homo</taxon>
    </lineage>
</organism>
<comment type="function">
    <text evidence="6 8 10 11 17">Rab effector playing a role in late endocytic transport to degradative compartments (PubMed:11179213, PubMed:11696325, PubMed:12944476, PubMed:14668488, PubMed:27113757). Involved in the regulation of lysosomal morphology and distribution (PubMed:14668488, PubMed:27113757). Induces recruitment of dynein-dynactin motor complexes to Rab7A-containing late endosome and lysosome compartments (PubMed:11179213, PubMed:11696325). Promotes centripetal migration of phagosomes and the fusion of phagosomes with the late endosomes and lysosomes (PubMed:12944476).</text>
</comment>
<comment type="subunit">
    <text evidence="1 6 9 11 13 14 15 16 17">Homodimer (PubMed:15933719, PubMed:15996637). Interacts with RAB7A (PubMed:11179213, PubMed:14668488, PubMed:22431521). Interacts with RAB34 (PubMed:12475955, PubMed:14668488, PubMed:27113757). Identified in a complex with MREG and DCTN1; interacts directly with MREG (By similarity). Interacts with CLN3 (PubMed:22261744). Interacts with FLCN; the interaction is direct and promotes association between RILP and RAB34 (PubMed:27113757).</text>
</comment>
<comment type="interaction">
    <interactant intactId="EBI-2856119">
        <id>Q96NA2</id>
    </interactant>
    <interactant intactId="EBI-1056089">
        <id>P51149</id>
        <label>RAB7A</label>
    </interactant>
    <organismsDiffer>false</organismsDiffer>
    <experiments>11</experiments>
</comment>
<comment type="interaction">
    <interactant intactId="EBI-2856119">
        <id>Q96NA2</id>
    </interactant>
    <interactant intactId="EBI-5235340">
        <id>Q7Z699</id>
        <label>SPRED1</label>
    </interactant>
    <organismsDiffer>false</organismsDiffer>
    <experiments>3</experiments>
</comment>
<comment type="interaction">
    <interactant intactId="EBI-2856119">
        <id>Q96NA2</id>
    </interactant>
    <interactant intactId="EBI-296151">
        <id>P37173</id>
        <label>TGFBR2</label>
    </interactant>
    <organismsDiffer>false</organismsDiffer>
    <experiments>3</experiments>
</comment>
<comment type="interaction">
    <interactant intactId="EBI-2856119">
        <id>Q96NA2</id>
    </interactant>
    <interactant intactId="EBI-2130459">
        <id>P49754</id>
        <label>VPS41</label>
    </interactant>
    <organismsDiffer>false</organismsDiffer>
    <experiments>4</experiments>
</comment>
<comment type="subcellular location">
    <subcellularLocation>
        <location evidence="6 10">Late endosome membrane</location>
    </subcellularLocation>
    <subcellularLocation>
        <location evidence="6 10 11">Lysosome membrane</location>
    </subcellularLocation>
    <subcellularLocation>
        <location evidence="10">Cytoplasmic vesicle</location>
        <location evidence="10">Phagosome membrane</location>
    </subcellularLocation>
    <text evidence="10">Associated with late endosomal, lysosomal and phagosomal membranes. The interaction with RAB7A is necessary for its recruitment to phagosomes.</text>
</comment>
<comment type="alternative products">
    <event type="alternative splicing"/>
    <isoform>
        <id>Q96NA2-1</id>
        <name>1</name>
        <sequence type="displayed"/>
    </isoform>
    <isoform>
        <id>Q96NA2-2</id>
        <name>2</name>
        <sequence type="described" ref="VSP_016043 VSP_016044"/>
    </isoform>
</comment>
<comment type="tissue specificity">
    <text evidence="6 7 11">Ubiquitous. Strongly expressed in fetal heart, heart, stomach, spleen, adrenal gland, thyroid gland, salivary gland, fetal liver, liver and lung. Poorly expressed in brain.</text>
</comment>
<protein>
    <recommendedName>
        <fullName>Rab-interacting lysosomal protein</fullName>
    </recommendedName>
</protein>
<feature type="chain" id="PRO_0000097339" description="Rab-interacting lysosomal protein">
    <location>
        <begin position="1"/>
        <end position="401"/>
    </location>
</feature>
<feature type="domain" description="RH1" evidence="3">
    <location>
        <begin position="11"/>
        <end position="101"/>
    </location>
</feature>
<feature type="domain" description="RH2" evidence="4">
    <location>
        <begin position="240"/>
        <end position="316"/>
    </location>
</feature>
<feature type="region of interest" description="Disordered" evidence="5">
    <location>
        <begin position="167"/>
        <end position="239"/>
    </location>
</feature>
<feature type="region of interest" description="Necessary for interaction with RAB7A and RAB34, lysosomal distribution and morphology">
    <location>
        <begin position="272"/>
        <end position="333"/>
    </location>
</feature>
<feature type="region of interest" description="Disordered" evidence="5">
    <location>
        <begin position="304"/>
        <end position="388"/>
    </location>
</feature>
<feature type="coiled-coil region" evidence="2">
    <location>
        <begin position="75"/>
        <end position="181"/>
    </location>
</feature>
<feature type="compositionally biased region" description="Basic and acidic residues" evidence="5">
    <location>
        <begin position="172"/>
        <end position="181"/>
    </location>
</feature>
<feature type="compositionally biased region" description="Acidic residues" evidence="5">
    <location>
        <begin position="310"/>
        <end position="319"/>
    </location>
</feature>
<feature type="modified residue" description="Phosphothreonine" evidence="21">
    <location>
        <position position="308"/>
    </location>
</feature>
<feature type="modified residue" description="Phosphoserine" evidence="20">
    <location>
        <position position="314"/>
    </location>
</feature>
<feature type="modified residue" description="Phosphoserine" evidence="20">
    <location>
        <position position="315"/>
    </location>
</feature>
<feature type="splice variant" id="VSP_016043" description="In isoform 2." evidence="18">
    <location>
        <begin position="1"/>
        <end position="210"/>
    </location>
</feature>
<feature type="splice variant" id="VSP_016044" description="In isoform 2." evidence="18">
    <original>WAT</original>
    <variation>MGA</variation>
    <location>
        <begin position="211"/>
        <end position="213"/>
    </location>
</feature>
<feature type="sequence variant" id="VAR_051321" description="In dbSNP:rs9909321." evidence="12">
    <original>A</original>
    <variation>T</variation>
    <location>
        <position position="81"/>
    </location>
</feature>
<feature type="sequence variant" id="VAR_034417" description="In dbSNP:rs34982553.">
    <original>R</original>
    <variation>Q</variation>
    <location>
        <position position="281"/>
    </location>
</feature>
<feature type="mutagenesis site" description="Strongly reduces dimerization and localization to late endosomal/lysosomal compartments." evidence="13">
    <original>F</original>
    <variation>A</variation>
    <location>
        <position position="248"/>
    </location>
</feature>
<feature type="mutagenesis site" description="Abolishes dimerization, interaction with RAB7A and localization to late endosomal/lysosomal compartments." evidence="13">
    <original>I</original>
    <variation>A</variation>
    <location>
        <position position="251"/>
    </location>
</feature>
<feature type="mutagenesis site" description="Abolishes interaction with RAB7A and localization to late endosomal/lysosomal compartments." evidence="13">
    <original>L</original>
    <variation>A</variation>
    <location>
        <position position="252"/>
    </location>
</feature>
<feature type="mutagenesis site" description="Abolishes dimerization, interaction with RAB7A and localization to late endosomal/lysosomal compartments." evidence="13">
    <original>R</original>
    <variation>A</variation>
    <location>
        <position position="255"/>
    </location>
</feature>
<feature type="mutagenesis site" description="Reduces dimerization, interaction with RAB7A and localization to late endosomal/lysosomal compartments." evidence="13">
    <original>L</original>
    <variation>A</variation>
    <location>
        <position position="258"/>
    </location>
</feature>
<feature type="mutagenesis site" description="Abolishes interaction with RAB7A and localization to late endosomal/lysosomal compartments." evidence="13">
    <original>K</original>
    <variation>A</variation>
    <location>
        <position position="304"/>
    </location>
</feature>
<feature type="mutagenesis site" description="Abolishes interaction with RAB7A and localization to late endosomal/lysosomal compartments." evidence="13">
    <original>M</original>
    <variation>A</variation>
    <location>
        <position position="305"/>
    </location>
</feature>
<feature type="mutagenesis site" description="Abolishes interaction with RAB7A and localization to late endosomal/lysosomal compartments." evidence="13">
    <original>L</original>
    <variation>A</variation>
    <location>
        <position position="306"/>
    </location>
</feature>
<feature type="sequence conflict" description="In Ref. 1; CAC33443." evidence="19" ref="1">
    <original>G</original>
    <variation>S</variation>
    <location>
        <position position="284"/>
    </location>
</feature>
<feature type="helix" evidence="22">
    <location>
        <begin position="248"/>
        <end position="276"/>
    </location>
</feature>
<feature type="helix" evidence="22">
    <location>
        <begin position="284"/>
        <end position="306"/>
    </location>
</feature>
<evidence type="ECO:0000250" key="1">
    <source>
        <dbReference type="UniProtKB" id="Q5ND29"/>
    </source>
</evidence>
<evidence type="ECO:0000255" key="2"/>
<evidence type="ECO:0000255" key="3">
    <source>
        <dbReference type="PROSITE-ProRule" id="PRU01112"/>
    </source>
</evidence>
<evidence type="ECO:0000255" key="4">
    <source>
        <dbReference type="PROSITE-ProRule" id="PRU01113"/>
    </source>
</evidence>
<evidence type="ECO:0000256" key="5">
    <source>
        <dbReference type="SAM" id="MobiDB-lite"/>
    </source>
</evidence>
<evidence type="ECO:0000269" key="6">
    <source>
    </source>
</evidence>
<evidence type="ECO:0000269" key="7">
    <source>
    </source>
</evidence>
<evidence type="ECO:0000269" key="8">
    <source>
    </source>
</evidence>
<evidence type="ECO:0000269" key="9">
    <source>
    </source>
</evidence>
<evidence type="ECO:0000269" key="10">
    <source>
    </source>
</evidence>
<evidence type="ECO:0000269" key="11">
    <source>
    </source>
</evidence>
<evidence type="ECO:0000269" key="12">
    <source>
    </source>
</evidence>
<evidence type="ECO:0000269" key="13">
    <source>
    </source>
</evidence>
<evidence type="ECO:0000269" key="14">
    <source>
    </source>
</evidence>
<evidence type="ECO:0000269" key="15">
    <source>
    </source>
</evidence>
<evidence type="ECO:0000269" key="16">
    <source>
    </source>
</evidence>
<evidence type="ECO:0000269" key="17">
    <source>
    </source>
</evidence>
<evidence type="ECO:0000303" key="18">
    <source>
    </source>
</evidence>
<evidence type="ECO:0000305" key="19"/>
<evidence type="ECO:0007744" key="20">
    <source>
    </source>
</evidence>
<evidence type="ECO:0007744" key="21">
    <source>
    </source>
</evidence>
<evidence type="ECO:0007829" key="22">
    <source>
        <dbReference type="PDB" id="1YHN"/>
    </source>
</evidence>